<comment type="function">
    <text evidence="1">Catalyzes the reversible formation of acyl-phosphate (acyl-PO(4)) from acyl-[acyl-carrier-protein] (acyl-ACP). This enzyme utilizes acyl-ACP as fatty acyl donor, but not acyl-CoA.</text>
</comment>
<comment type="catalytic activity">
    <reaction evidence="1">
        <text>a fatty acyl-[ACP] + phosphate = an acyl phosphate + holo-[ACP]</text>
        <dbReference type="Rhea" id="RHEA:42292"/>
        <dbReference type="Rhea" id="RHEA-COMP:9685"/>
        <dbReference type="Rhea" id="RHEA-COMP:14125"/>
        <dbReference type="ChEBI" id="CHEBI:43474"/>
        <dbReference type="ChEBI" id="CHEBI:59918"/>
        <dbReference type="ChEBI" id="CHEBI:64479"/>
        <dbReference type="ChEBI" id="CHEBI:138651"/>
        <dbReference type="EC" id="2.3.1.274"/>
    </reaction>
</comment>
<comment type="pathway">
    <text evidence="1">Lipid metabolism; phospholipid metabolism.</text>
</comment>
<comment type="subunit">
    <text evidence="1">Homodimer. Probably interacts with PlsY.</text>
</comment>
<comment type="subcellular location">
    <subcellularLocation>
        <location evidence="1">Cytoplasm</location>
    </subcellularLocation>
    <text evidence="1">Associated with the membrane possibly through PlsY.</text>
</comment>
<comment type="similarity">
    <text evidence="1">Belongs to the PlsX family.</text>
</comment>
<proteinExistence type="inferred from homology"/>
<dbReference type="EC" id="2.3.1.274" evidence="1"/>
<dbReference type="EMBL" id="CP000051">
    <property type="protein sequence ID" value="AAX51092.1"/>
    <property type="molecule type" value="Genomic_DNA"/>
</dbReference>
<dbReference type="RefSeq" id="WP_011324877.1">
    <property type="nucleotide sequence ID" value="NC_007429.1"/>
</dbReference>
<dbReference type="SMR" id="Q3KKN0"/>
<dbReference type="KEGG" id="cta:CTA_0883"/>
<dbReference type="HOGENOM" id="CLU_039379_1_1_0"/>
<dbReference type="UniPathway" id="UPA00085"/>
<dbReference type="Proteomes" id="UP000002532">
    <property type="component" value="Chromosome"/>
</dbReference>
<dbReference type="GO" id="GO:0005737">
    <property type="term" value="C:cytoplasm"/>
    <property type="evidence" value="ECO:0007669"/>
    <property type="project" value="UniProtKB-SubCell"/>
</dbReference>
<dbReference type="GO" id="GO:0043811">
    <property type="term" value="F:phosphate:acyl-[acyl carrier protein] acyltransferase activity"/>
    <property type="evidence" value="ECO:0007669"/>
    <property type="project" value="UniProtKB-UniRule"/>
</dbReference>
<dbReference type="GO" id="GO:0006633">
    <property type="term" value="P:fatty acid biosynthetic process"/>
    <property type="evidence" value="ECO:0007669"/>
    <property type="project" value="UniProtKB-UniRule"/>
</dbReference>
<dbReference type="GO" id="GO:0008654">
    <property type="term" value="P:phospholipid biosynthetic process"/>
    <property type="evidence" value="ECO:0007669"/>
    <property type="project" value="UniProtKB-KW"/>
</dbReference>
<dbReference type="Gene3D" id="3.40.718.10">
    <property type="entry name" value="Isopropylmalate Dehydrogenase"/>
    <property type="match status" value="1"/>
</dbReference>
<dbReference type="HAMAP" id="MF_00019">
    <property type="entry name" value="PlsX"/>
    <property type="match status" value="1"/>
</dbReference>
<dbReference type="InterPro" id="IPR003664">
    <property type="entry name" value="FA_synthesis"/>
</dbReference>
<dbReference type="InterPro" id="IPR012281">
    <property type="entry name" value="Phospholipid_synth_PlsX-like"/>
</dbReference>
<dbReference type="NCBIfam" id="NF010420">
    <property type="entry name" value="PRK13846.1"/>
    <property type="match status" value="1"/>
</dbReference>
<dbReference type="PANTHER" id="PTHR30100">
    <property type="entry name" value="FATTY ACID/PHOSPHOLIPID SYNTHESIS PROTEIN PLSX"/>
    <property type="match status" value="1"/>
</dbReference>
<dbReference type="PANTHER" id="PTHR30100:SF1">
    <property type="entry name" value="PHOSPHATE ACYLTRANSFERASE"/>
    <property type="match status" value="1"/>
</dbReference>
<dbReference type="Pfam" id="PF02504">
    <property type="entry name" value="FA_synthesis"/>
    <property type="match status" value="1"/>
</dbReference>
<dbReference type="PIRSF" id="PIRSF002465">
    <property type="entry name" value="Phsphlp_syn_PlsX"/>
    <property type="match status" value="1"/>
</dbReference>
<dbReference type="SUPFAM" id="SSF53659">
    <property type="entry name" value="Isocitrate/Isopropylmalate dehydrogenase-like"/>
    <property type="match status" value="1"/>
</dbReference>
<gene>
    <name evidence="1" type="primary">plsX</name>
    <name type="ordered locus">CTA_0883</name>
</gene>
<accession>Q3KKN0</accession>
<feature type="chain" id="PRO_1000001745" description="Phosphate acyltransferase">
    <location>
        <begin position="1"/>
        <end position="321"/>
    </location>
</feature>
<organism>
    <name type="scientific">Chlamydia trachomatis serovar A (strain ATCC VR-571B / DSM 19440 / HAR-13)</name>
    <dbReference type="NCBI Taxonomy" id="315277"/>
    <lineage>
        <taxon>Bacteria</taxon>
        <taxon>Pseudomonadati</taxon>
        <taxon>Chlamydiota</taxon>
        <taxon>Chlamydiia</taxon>
        <taxon>Chlamydiales</taxon>
        <taxon>Chlamydiaceae</taxon>
        <taxon>Chlamydia/Chlamydophila group</taxon>
        <taxon>Chlamydia</taxon>
    </lineage>
</organism>
<evidence type="ECO:0000255" key="1">
    <source>
        <dbReference type="HAMAP-Rule" id="MF_00019"/>
    </source>
</evidence>
<keyword id="KW-0963">Cytoplasm</keyword>
<keyword id="KW-0444">Lipid biosynthesis</keyword>
<keyword id="KW-0443">Lipid metabolism</keyword>
<keyword id="KW-0594">Phospholipid biosynthesis</keyword>
<keyword id="KW-1208">Phospholipid metabolism</keyword>
<keyword id="KW-0808">Transferase</keyword>
<name>PLSX_CHLTA</name>
<sequence>MKVRLGVDMMGGDHDPLVVWEALGEVLLSSIGEQPVEFTVFATSDVHHQLMNSPLSRSVRIVTAEDFVSMEDSLLAAVRKKRSSMALGLDALQQGDLDGFVSSGNTAALVTLARSKIPMIPAVPRPALLVSVPTLSGFAVILDVGATVSVNPDEMVGFARMGLAYRQSLSSNSNQPFTLGLLNIGSEERKGTDSHKQTFRMLRNIFGSAFLGNIESGDVFSGKVDIVVTDGFTGNVFLKTAEGLFDFLRRILGDRLEKSIKMQFDYTIYPGSIISGLSRLVIKCHGKSHGTALFGGISGAIDLARANVCSRIADRFGDNVV</sequence>
<reference key="1">
    <citation type="journal article" date="2005" name="Infect. Immun.">
        <title>Comparative genomic analysis of Chlamydia trachomatis oculotropic and genitotropic strains.</title>
        <authorList>
            <person name="Carlson J.H."/>
            <person name="Porcella S.F."/>
            <person name="McClarty G."/>
            <person name="Caldwell H.D."/>
        </authorList>
    </citation>
    <scope>NUCLEOTIDE SEQUENCE [LARGE SCALE GENOMIC DNA]</scope>
    <source>
        <strain>ATCC VR-571B / DSM 19440 / HAR-13</strain>
    </source>
</reference>
<protein>
    <recommendedName>
        <fullName evidence="1">Phosphate acyltransferase</fullName>
        <ecNumber evidence="1">2.3.1.274</ecNumber>
    </recommendedName>
    <alternativeName>
        <fullName evidence="1">Acyl-ACP phosphotransacylase</fullName>
    </alternativeName>
    <alternativeName>
        <fullName evidence="1">Acyl-[acyl-carrier-protein]--phosphate acyltransferase</fullName>
    </alternativeName>
    <alternativeName>
        <fullName evidence="1">Phosphate-acyl-ACP acyltransferase</fullName>
    </alternativeName>
</protein>